<accession>A0R3E0</accession>
<accession>I7GE51</accession>
<feature type="signal peptide" evidence="2">
    <location>
        <begin position="1"/>
        <end position="22"/>
    </location>
</feature>
<feature type="chain" id="PRO_0000421028" description="Resuscitation-promoting factor RpfB">
    <location>
        <begin position="23"/>
        <end position="362"/>
    </location>
</feature>
<feature type="domain" description="G5" evidence="3">
    <location>
        <begin position="192"/>
        <end position="272"/>
    </location>
</feature>
<gene>
    <name type="primary">rpfB</name>
    <name type="ordered locus">MSMEG_5439</name>
    <name type="ordered locus">MSMEI_5289</name>
</gene>
<protein>
    <recommendedName>
        <fullName>Resuscitation-promoting factor RpfB</fullName>
        <ecNumber>3.-.-.-</ecNumber>
    </recommendedName>
</protein>
<organism>
    <name type="scientific">Mycolicibacterium smegmatis (strain ATCC 700084 / mc(2)155)</name>
    <name type="common">Mycobacterium smegmatis</name>
    <dbReference type="NCBI Taxonomy" id="246196"/>
    <lineage>
        <taxon>Bacteria</taxon>
        <taxon>Bacillati</taxon>
        <taxon>Actinomycetota</taxon>
        <taxon>Actinomycetes</taxon>
        <taxon>Mycobacteriales</taxon>
        <taxon>Mycobacteriaceae</taxon>
        <taxon>Mycolicibacterium</taxon>
    </lineage>
</organism>
<reference key="1">
    <citation type="submission" date="2006-10" db="EMBL/GenBank/DDBJ databases">
        <authorList>
            <person name="Fleischmann R.D."/>
            <person name="Dodson R.J."/>
            <person name="Haft D.H."/>
            <person name="Merkel J.S."/>
            <person name="Nelson W.C."/>
            <person name="Fraser C.M."/>
        </authorList>
    </citation>
    <scope>NUCLEOTIDE SEQUENCE [LARGE SCALE GENOMIC DNA]</scope>
    <source>
        <strain>ATCC 700084 / mc(2)155</strain>
    </source>
</reference>
<reference key="2">
    <citation type="journal article" date="2007" name="Genome Biol.">
        <title>Interrupted coding sequences in Mycobacterium smegmatis: authentic mutations or sequencing errors?</title>
        <authorList>
            <person name="Deshayes C."/>
            <person name="Perrodou E."/>
            <person name="Gallien S."/>
            <person name="Euphrasie D."/>
            <person name="Schaeffer C."/>
            <person name="Van-Dorsselaer A."/>
            <person name="Poch O."/>
            <person name="Lecompte O."/>
            <person name="Reyrat J.-M."/>
        </authorList>
    </citation>
    <scope>NUCLEOTIDE SEQUENCE [LARGE SCALE GENOMIC DNA]</scope>
    <source>
        <strain>ATCC 700084 / mc(2)155</strain>
    </source>
</reference>
<reference key="3">
    <citation type="journal article" date="2009" name="Genome Res.">
        <title>Ortho-proteogenomics: multiple proteomes investigation through orthology and a new MS-based protocol.</title>
        <authorList>
            <person name="Gallien S."/>
            <person name="Perrodou E."/>
            <person name="Carapito C."/>
            <person name="Deshayes C."/>
            <person name="Reyrat J.-M."/>
            <person name="Van Dorsselaer A."/>
            <person name="Poch O."/>
            <person name="Schaeffer C."/>
            <person name="Lecompte O."/>
        </authorList>
    </citation>
    <scope>NUCLEOTIDE SEQUENCE [LARGE SCALE GENOMIC DNA]</scope>
    <source>
        <strain>ATCC 700084 / mc(2)155</strain>
    </source>
</reference>
<reference key="4">
    <citation type="journal article" date="2008" name="PLoS Pathog.">
        <title>A mycobacterial enzyme essential for cell division synergizes with resuscitation-promoting factor.</title>
        <authorList>
            <person name="Hett E.C."/>
            <person name="Chao M.C."/>
            <person name="Deng L.L."/>
            <person name="Rubin E.J."/>
        </authorList>
    </citation>
    <scope>DISRUPTION PHENOTYPE</scope>
    <source>
        <strain>ATCC 700084 / mc(2)155</strain>
    </source>
</reference>
<comment type="function">
    <text evidence="1">Factor that stimulates resuscitation of dormant cells. Has peptidoglycan (PG) hydrolytic activity. Active in the pM concentration range. Has little to no effect on actively-growing cells. PG fragments could either directly activate the resuscitation pathway of dormant bacteria or serve as a substrate for endogenous Rpf, resulting in low molecular weight products with resuscitation activity (By similarity).</text>
</comment>
<comment type="disruption phenotype">
    <text evidence="4">Not essential, grows normally.</text>
</comment>
<comment type="similarity">
    <text evidence="5">Belongs to the transglycosylase family. Rpf subfamily.</text>
</comment>
<comment type="sequence caution" evidence="5">
    <conflict type="erroneous initiation">
        <sequence resource="EMBL-CDS" id="ABK73651"/>
    </conflict>
    <text>Extended N-terminus.</text>
</comment>
<dbReference type="EC" id="3.-.-.-"/>
<dbReference type="EMBL" id="CP000480">
    <property type="protein sequence ID" value="ABK73651.1"/>
    <property type="status" value="ALT_INIT"/>
    <property type="molecule type" value="Genomic_DNA"/>
</dbReference>
<dbReference type="EMBL" id="CP001663">
    <property type="protein sequence ID" value="AFP41731.1"/>
    <property type="molecule type" value="Genomic_DNA"/>
</dbReference>
<dbReference type="RefSeq" id="YP_889678.1">
    <property type="nucleotide sequence ID" value="NC_008596.1"/>
</dbReference>
<dbReference type="SMR" id="A0R3E0"/>
<dbReference type="STRING" id="246196.MSMEG_5439"/>
<dbReference type="CAZy" id="GH23">
    <property type="family name" value="Glycoside Hydrolase Family 23"/>
</dbReference>
<dbReference type="PaxDb" id="246196-MSMEI_5289"/>
<dbReference type="KEGG" id="msg:MSMEI_5289"/>
<dbReference type="KEGG" id="msm:MSMEG_5439"/>
<dbReference type="PATRIC" id="fig|246196.19.peg.5300"/>
<dbReference type="eggNOG" id="COG3583">
    <property type="taxonomic scope" value="Bacteria"/>
</dbReference>
<dbReference type="OrthoDB" id="1404170at2"/>
<dbReference type="Proteomes" id="UP000000757">
    <property type="component" value="Chromosome"/>
</dbReference>
<dbReference type="Proteomes" id="UP000006158">
    <property type="component" value="Chromosome"/>
</dbReference>
<dbReference type="GO" id="GO:0016787">
    <property type="term" value="F:hydrolase activity"/>
    <property type="evidence" value="ECO:0007669"/>
    <property type="project" value="UniProtKB-KW"/>
</dbReference>
<dbReference type="GO" id="GO:0016998">
    <property type="term" value="P:cell wall macromolecule catabolic process"/>
    <property type="evidence" value="ECO:0000316"/>
    <property type="project" value="UniProtKB"/>
</dbReference>
<dbReference type="GO" id="GO:0009253">
    <property type="term" value="P:peptidoglycan catabolic process"/>
    <property type="evidence" value="ECO:0000316"/>
    <property type="project" value="UniProtKB"/>
</dbReference>
<dbReference type="CDD" id="cd13925">
    <property type="entry name" value="RPF"/>
    <property type="match status" value="1"/>
</dbReference>
<dbReference type="FunFam" id="1.10.530.10:FF:000015">
    <property type="entry name" value="Resuscitation-promoting factor RpfB"/>
    <property type="match status" value="1"/>
</dbReference>
<dbReference type="Gene3D" id="1.10.530.10">
    <property type="match status" value="1"/>
</dbReference>
<dbReference type="Gene3D" id="2.20.230.10">
    <property type="entry name" value="Resuscitation-promoting factor rpfb"/>
    <property type="match status" value="1"/>
</dbReference>
<dbReference type="InterPro" id="IPR007137">
    <property type="entry name" value="DUF348"/>
</dbReference>
<dbReference type="InterPro" id="IPR011098">
    <property type="entry name" value="G5_dom"/>
</dbReference>
<dbReference type="InterPro" id="IPR023346">
    <property type="entry name" value="Lysozyme-like_dom_sf"/>
</dbReference>
<dbReference type="InterPro" id="IPR051933">
    <property type="entry name" value="Resuscitation_pf_RpfB"/>
</dbReference>
<dbReference type="InterPro" id="IPR010618">
    <property type="entry name" value="RPF"/>
</dbReference>
<dbReference type="PANTHER" id="PTHR39160">
    <property type="entry name" value="CELL WALL-BINDING PROTEIN YOCH"/>
    <property type="match status" value="1"/>
</dbReference>
<dbReference type="PANTHER" id="PTHR39160:SF4">
    <property type="entry name" value="RESUSCITATION-PROMOTING FACTOR RPFB"/>
    <property type="match status" value="1"/>
</dbReference>
<dbReference type="Pfam" id="PF03990">
    <property type="entry name" value="DUF348"/>
    <property type="match status" value="3"/>
</dbReference>
<dbReference type="Pfam" id="PF07501">
    <property type="entry name" value="G5"/>
    <property type="match status" value="1"/>
</dbReference>
<dbReference type="Pfam" id="PF06737">
    <property type="entry name" value="Transglycosylas"/>
    <property type="match status" value="1"/>
</dbReference>
<dbReference type="SMART" id="SM01208">
    <property type="entry name" value="G5"/>
    <property type="match status" value="1"/>
</dbReference>
<dbReference type="SUPFAM" id="SSF53955">
    <property type="entry name" value="Lysozyme-like"/>
    <property type="match status" value="1"/>
</dbReference>
<dbReference type="PROSITE" id="PS51109">
    <property type="entry name" value="G5"/>
    <property type="match status" value="1"/>
</dbReference>
<name>RPFB_MYCS2</name>
<proteinExistence type="inferred from homology"/>
<sequence length="362" mass="38271">MLRGVVGAFLVSLTVAGSYAVASHKTVTLSVDGAPMTVTTMKSRVIDIVEENGFEVSDRDDLFPAATETVHQSDTIVLRRSRPLEVSLDGEGTKQVWTTASTVDEALAQLRMTDKAPAAASRGSRVPLAGMALPVVSPKTVQIDDGGKVSTVHLAAPNVAGLLEAAGVPLEQNDKVVPAASSPVVDGMQIQVTRMRIEKVTERVPLAPGNERIEDPTMNMSRQVVEDPGAPGLQDVTFAIAKVNGVETGRLPVANQVIEPARNGVLRVGAKPGTEVPPVSNGHTWDALAQCEAGGNWAINTGNGFYGGVQFDQNTWERNGGLRYAPRADLATREEQIAIATVTQSRQGWGAWPVCSGRIGAR</sequence>
<keyword id="KW-0378">Hydrolase</keyword>
<keyword id="KW-1185">Reference proteome</keyword>
<keyword id="KW-0732">Signal</keyword>
<evidence type="ECO:0000250" key="1"/>
<evidence type="ECO:0000255" key="2"/>
<evidence type="ECO:0000255" key="3">
    <source>
        <dbReference type="PROSITE-ProRule" id="PRU00437"/>
    </source>
</evidence>
<evidence type="ECO:0000269" key="4">
    <source>
    </source>
</evidence>
<evidence type="ECO:0000305" key="5"/>